<feature type="chain" id="PRO_0000329264" description="Phosphate acyltransferase">
    <location>
        <begin position="1"/>
        <end position="356"/>
    </location>
</feature>
<keyword id="KW-0963">Cytoplasm</keyword>
<keyword id="KW-0444">Lipid biosynthesis</keyword>
<keyword id="KW-0443">Lipid metabolism</keyword>
<keyword id="KW-0594">Phospholipid biosynthesis</keyword>
<keyword id="KW-1208">Phospholipid metabolism</keyword>
<keyword id="KW-1185">Reference proteome</keyword>
<keyword id="KW-0808">Transferase</keyword>
<comment type="function">
    <text evidence="1">Catalyzes the reversible formation of acyl-phosphate (acyl-PO(4)) from acyl-[acyl-carrier-protein] (acyl-ACP). This enzyme utilizes acyl-ACP as fatty acyl donor, but not acyl-CoA.</text>
</comment>
<comment type="catalytic activity">
    <reaction evidence="1">
        <text>a fatty acyl-[ACP] + phosphate = an acyl phosphate + holo-[ACP]</text>
        <dbReference type="Rhea" id="RHEA:42292"/>
        <dbReference type="Rhea" id="RHEA-COMP:9685"/>
        <dbReference type="Rhea" id="RHEA-COMP:14125"/>
        <dbReference type="ChEBI" id="CHEBI:43474"/>
        <dbReference type="ChEBI" id="CHEBI:59918"/>
        <dbReference type="ChEBI" id="CHEBI:64479"/>
        <dbReference type="ChEBI" id="CHEBI:138651"/>
        <dbReference type="EC" id="2.3.1.274"/>
    </reaction>
</comment>
<comment type="pathway">
    <text evidence="1">Lipid metabolism; phospholipid metabolism.</text>
</comment>
<comment type="subunit">
    <text evidence="1">Homodimer. Probably interacts with PlsY.</text>
</comment>
<comment type="subcellular location">
    <subcellularLocation>
        <location evidence="1">Cytoplasm</location>
    </subcellularLocation>
    <text evidence="1">Associated with the membrane possibly through PlsY.</text>
</comment>
<comment type="similarity">
    <text evidence="1">Belongs to the PlsX family.</text>
</comment>
<comment type="sequence caution" evidence="2">
    <conflict type="erroneous initiation">
        <sequence resource="EMBL-CDS" id="ABB62155"/>
    </conflict>
</comment>
<sequence length="356" mass="38196">MTRLTLALDVMGGDFGPSVTVPAALQALNSNSQLTLLLVGNPDAITPLLAKADSEQRSRLQIIPAQSVIASDARPSQAIRASRGSSMRMALELVKEGRAQACVSAGNTGALMGLAKLLLKPLEGIERPALVTVLPHQQKGKTVVLDLGANVDCDSTMLVQFAIMGSVLAEEVVEIPNPRVALLNIGEEEVKGLDSIRDASAVLKTIPSINYIGYLEANELLTGKTDVLVCDGFTGNVTLKTMEGVVRMFLSLLKSQGEGKKRSWWLLLLKRWLQKSLTRRFSHLNPDQYNGACLLGLRGTVIKSHGAANQRAFAVAIEQAVQAVQRQVPQRIAARLESVYPAGFELLDGGKSGTLR</sequence>
<evidence type="ECO:0000255" key="1">
    <source>
        <dbReference type="HAMAP-Rule" id="MF_00019"/>
    </source>
</evidence>
<evidence type="ECO:0000305" key="2"/>
<organism>
    <name type="scientific">Shigella dysenteriae serotype 1 (strain Sd197)</name>
    <dbReference type="NCBI Taxonomy" id="300267"/>
    <lineage>
        <taxon>Bacteria</taxon>
        <taxon>Pseudomonadati</taxon>
        <taxon>Pseudomonadota</taxon>
        <taxon>Gammaproteobacteria</taxon>
        <taxon>Enterobacterales</taxon>
        <taxon>Enterobacteriaceae</taxon>
        <taxon>Shigella</taxon>
    </lineage>
</organism>
<gene>
    <name evidence="1" type="primary">plsX</name>
    <name type="ordered locus">SDY_2060</name>
</gene>
<dbReference type="EC" id="2.3.1.274" evidence="1"/>
<dbReference type="EMBL" id="CP000034">
    <property type="protein sequence ID" value="ABB62155.1"/>
    <property type="status" value="ALT_INIT"/>
    <property type="molecule type" value="Genomic_DNA"/>
</dbReference>
<dbReference type="RefSeq" id="WP_000197594.1">
    <property type="nucleotide sequence ID" value="NC_007606.1"/>
</dbReference>
<dbReference type="RefSeq" id="YP_403646.2">
    <property type="nucleotide sequence ID" value="NC_007606.1"/>
</dbReference>
<dbReference type="SMR" id="Q32EV0"/>
<dbReference type="STRING" id="300267.SDY_2060"/>
<dbReference type="EnsemblBacteria" id="ABB62155">
    <property type="protein sequence ID" value="ABB62155"/>
    <property type="gene ID" value="SDY_2060"/>
</dbReference>
<dbReference type="KEGG" id="sdy:SDY_2060"/>
<dbReference type="PATRIC" id="fig|300267.13.peg.2475"/>
<dbReference type="HOGENOM" id="CLU_039379_1_0_6"/>
<dbReference type="UniPathway" id="UPA00085"/>
<dbReference type="Proteomes" id="UP000002716">
    <property type="component" value="Chromosome"/>
</dbReference>
<dbReference type="GO" id="GO:0005737">
    <property type="term" value="C:cytoplasm"/>
    <property type="evidence" value="ECO:0007669"/>
    <property type="project" value="UniProtKB-SubCell"/>
</dbReference>
<dbReference type="GO" id="GO:0043811">
    <property type="term" value="F:phosphate:acyl-[acyl carrier protein] acyltransferase activity"/>
    <property type="evidence" value="ECO:0007669"/>
    <property type="project" value="UniProtKB-UniRule"/>
</dbReference>
<dbReference type="GO" id="GO:0006633">
    <property type="term" value="P:fatty acid biosynthetic process"/>
    <property type="evidence" value="ECO:0007669"/>
    <property type="project" value="UniProtKB-UniRule"/>
</dbReference>
<dbReference type="GO" id="GO:0008654">
    <property type="term" value="P:phospholipid biosynthetic process"/>
    <property type="evidence" value="ECO:0007669"/>
    <property type="project" value="UniProtKB-KW"/>
</dbReference>
<dbReference type="FunFam" id="3.40.718.10:FF:000008">
    <property type="entry name" value="Phosphate acyltransferase"/>
    <property type="match status" value="1"/>
</dbReference>
<dbReference type="Gene3D" id="3.40.718.10">
    <property type="entry name" value="Isopropylmalate Dehydrogenase"/>
    <property type="match status" value="1"/>
</dbReference>
<dbReference type="HAMAP" id="MF_00019">
    <property type="entry name" value="PlsX"/>
    <property type="match status" value="1"/>
</dbReference>
<dbReference type="InterPro" id="IPR003664">
    <property type="entry name" value="FA_synthesis"/>
</dbReference>
<dbReference type="InterPro" id="IPR012281">
    <property type="entry name" value="Phospholipid_synth_PlsX-like"/>
</dbReference>
<dbReference type="NCBIfam" id="TIGR00182">
    <property type="entry name" value="plsX"/>
    <property type="match status" value="1"/>
</dbReference>
<dbReference type="PANTHER" id="PTHR30100">
    <property type="entry name" value="FATTY ACID/PHOSPHOLIPID SYNTHESIS PROTEIN PLSX"/>
    <property type="match status" value="1"/>
</dbReference>
<dbReference type="PANTHER" id="PTHR30100:SF1">
    <property type="entry name" value="PHOSPHATE ACYLTRANSFERASE"/>
    <property type="match status" value="1"/>
</dbReference>
<dbReference type="Pfam" id="PF02504">
    <property type="entry name" value="FA_synthesis"/>
    <property type="match status" value="1"/>
</dbReference>
<dbReference type="PIRSF" id="PIRSF002465">
    <property type="entry name" value="Phsphlp_syn_PlsX"/>
    <property type="match status" value="1"/>
</dbReference>
<dbReference type="SUPFAM" id="SSF53659">
    <property type="entry name" value="Isocitrate/Isopropylmalate dehydrogenase-like"/>
    <property type="match status" value="1"/>
</dbReference>
<protein>
    <recommendedName>
        <fullName evidence="1">Phosphate acyltransferase</fullName>
        <ecNumber evidence="1">2.3.1.274</ecNumber>
    </recommendedName>
    <alternativeName>
        <fullName evidence="1">Acyl-ACP phosphotransacylase</fullName>
    </alternativeName>
    <alternativeName>
        <fullName evidence="1">Acyl-[acyl-carrier-protein]--phosphate acyltransferase</fullName>
    </alternativeName>
    <alternativeName>
        <fullName evidence="1">Phosphate-acyl-ACP acyltransferase</fullName>
    </alternativeName>
</protein>
<reference key="1">
    <citation type="journal article" date="2005" name="Nucleic Acids Res.">
        <title>Genome dynamics and diversity of Shigella species, the etiologic agents of bacillary dysentery.</title>
        <authorList>
            <person name="Yang F."/>
            <person name="Yang J."/>
            <person name="Zhang X."/>
            <person name="Chen L."/>
            <person name="Jiang Y."/>
            <person name="Yan Y."/>
            <person name="Tang X."/>
            <person name="Wang J."/>
            <person name="Xiong Z."/>
            <person name="Dong J."/>
            <person name="Xue Y."/>
            <person name="Zhu Y."/>
            <person name="Xu X."/>
            <person name="Sun L."/>
            <person name="Chen S."/>
            <person name="Nie H."/>
            <person name="Peng J."/>
            <person name="Xu J."/>
            <person name="Wang Y."/>
            <person name="Yuan Z."/>
            <person name="Wen Y."/>
            <person name="Yao Z."/>
            <person name="Shen Y."/>
            <person name="Qiang B."/>
            <person name="Hou Y."/>
            <person name="Yu J."/>
            <person name="Jin Q."/>
        </authorList>
    </citation>
    <scope>NUCLEOTIDE SEQUENCE [LARGE SCALE GENOMIC DNA]</scope>
    <source>
        <strain>Sd197</strain>
    </source>
</reference>
<accession>Q32EV0</accession>
<name>PLSX_SHIDS</name>
<proteinExistence type="inferred from homology"/>